<sequence length="1630" mass="183622">MDVETQEIRQARQRASVKWLLSKAFNNRVPDNLKEPFYRDHENQERLKPQIIVELGNATLYCQTLANLYSDPNYQSMNHWSIIQTLARKGVPVAESADMPITETVLIQTNPLRINAHMSVIESLMVLYAKEISSGDRVMAAIRRISGNNYQAPTGQSYEQALLGWISHACAALKKRIIKEVDAGLPDDNGSRLQTPDIPPVRDFQDLCDGICLALLISYYCPKVVPWTSVRINYLPAVEDSIHNILLVCNFSQKHLPYTVMHMTPEDVTYMRGSMKLNLVVLLTDLFNLFEIHPAKCVCYPGMDGQVPHSNSFGGGLNRRSTPPNEYQTVQSNNFDGNHAEAFVVHKSRGITTLASMHSQQQQQLHQQQQHQQQYHQQPLQQHPSQSQLQIQQQEPLVPARLRQAKEKTNVESKADERGRRSRRNSSSEDSQLTIENFGGSQDQLNTLGRYERDRERKLSNTSVGSYPVEPAVAVRSSIADARGTLQLGYDTDSGSEKQDRETEKYSMRRQVSVDNVPTVSSHNLSNAGSPLPVARHKQHSSDKDYSSNSGMTPDAYNDSRSTSGYDPESTPVRKSSTSSMPASPAAWQLDVGDDDMRSLENASKLSTIRMKLEEKRRRIEQDKRKIEMALLRHQEKEDLESCPDVMKWETMSNESKRTPDMDPVDLDKYQQSIAIMNMNLQDIQQDIHRLATQQSQMQAQHLQAQQLMQAQQIANMLNQAYNAPVSAYSSRPPSRDPYQQQLHHQQQQPMPMPQPMQYVNEHGQYMSPPQPAHYMPQQAQQPQSIYSDNGAAYNHSNHSPYGGTPQYRSSVVYDDYGQPTNHFYLHESSPQPQAHQHPQRRTWAHSAAAAAYEQQQQIQPSLVDVNAWQTQQHQKQKQTWMNRPPSSAGAPSPGSFMLHQNGGGGGGGGGGGELQHLFQVQASPQHGQRQVSGSNGVQRQQSLTNLRDNRSPKAPQNMGMPMGMPMQQEDMMAPQSICFIGDEEDVDELERNIIESMQSTHISDFVHQQQQQHQHQQQLQQQQRLQGHSGRGSSSEDYDSGEMISNKLNITSGNLTYRIPSPSRPSIQANSFQDPRAMAAASGGEDQPPEKGFYISFDDEQPKRPKPPLRAKRSPKKESPPGSRDSVDNQATLKRESLSHLHNNNNIGFGNDDVNSKPVTRHSIHGLNNSNSVKSPGNATYNKYTDEPPIQLRQLAVSGAMSPTSNERHHLDDVSNQSPQQTQQPMSPTRLQQSSNNAEAAKNKALVIGADSTNLDPESVDEMERRKEKIMLLSLQRRQQQEEAKARKEIEASQKREKEREKEEERARKKEEQMARRAAILEQHRLKKAIEEAEREGKTLDRPDLHVKLQSHSSTSTTPRLRQQRTTRPRPKTIHVDDASVDISEASSISSRGKKGSSSNLTGYGQLSSNSMKRDYYRGSQDSLTVKESPDDYPSTSSTPIGRRGSYKTSREPAGVERGRTLSRISVAKGSTLNFRGRKSNSLMNLCGPKLYKQPAAKSNRGIILNAVEYCVFPGVVNREAKQKVLEKIARSEAKHFLVLFRDAGCQFRALYSYQPETDQVTKLYGTGPSQVEEVMFDKFFKYNSGGKCFSQVHTKHLTVTIDAFTIHNSLWQGKRVQLPSKKDMALVI</sequence>
<gene>
    <name type="primary">Patronin</name>
    <name type="synonym">l(2)k07433</name>
    <name type="synonym">ssp4</name>
    <name type="ORF">CG33130</name>
</gene>
<comment type="function">
    <text evidence="6 8 9 10 11 12">Key microtubule-organizing protein that specifically binds the minus-end of microtubules and regulates their dynamics and organization (PubMed:17412918, PubMed:20946984, PubMed:24100293, PubMed:26246606, PubMed:32066907). Involved in mitotic spindle assembly (PubMed:17412918, PubMed:26246606). Regulates microtubule (MT) severing (PubMed:17412918). Antagonizes the activity of the kinesin-13 depolymerase Klp10A thereby switching off the depolymerization of the MTs at their pole-associated minus ends, which turns off poleward flux and induces anaphase B spindle elongation (PubMed:20946984, PubMed:24100293). Involved in asymmetric cell division of sensory organ precursor (SOP) cells by playing a role in the asymmetric localization of Sara-expressing endosomes to the pIIa daughter cell but not to the pIIb cell. Klp98A targets Sara-expressing endosomes to the central spindle which is symmetrically arranged in early cell division. During late cytokinesis, central spindle asymmetry is generated by enrichment of Patronin on the pIIb side which protects microtubules from depolymerization by Klp10A while unprotected microtubules on the pIIa side are disassembled by Klp10A, leading to the asymmetric delivery of Sara-expressing endosomes to the pIIa daughter cell (PubMed:26659188). In fat body cells, part of perinuclear non-centrosomal microtubule-organizing centers (ncMTOCs) which function to accommodate the organization of microtubule (MT) networks to control nuclear positioning and dynein motor-based retrograde endosomal trafficking (PubMed:32066907). Within the ncMTOC, Msp300 and shot anchors the ncMTOC at the nuclear surface and recruits the MT minus-end regulators Patronin and Nin for assembly, anchoring and/or stabilization of circumferential and radial MTs at the ncMTOCs (PubMed:32066907). This protein, and perhaps Nin, recruits msps to the ncMTOC for the gamma-tubulin-independent elongation of radial MTs (PubMed:32066907).</text>
</comment>
<comment type="subunit">
    <text evidence="8 12">Interacts with msps (PubMed:32066907). Associates with the minus end of the microtubules (PubMed:20946984).</text>
</comment>
<comment type="subcellular location">
    <subcellularLocation>
        <location evidence="9">Cytoplasm</location>
        <location evidence="9">Cytoskeleton</location>
        <location evidence="9">Microtubule organizing center</location>
        <location evidence="9">Spindle pole body</location>
    </subcellularLocation>
    <subcellularLocation>
        <location evidence="8">Cytoplasm</location>
        <location evidence="8">Cytoskeleton</location>
        <location evidence="8">Microtubule organizing center</location>
        <location evidence="8">Centrosome</location>
    </subcellularLocation>
    <subcellularLocation>
        <location evidence="12">Cytoplasm</location>
        <location evidence="12">Cytoskeleton</location>
        <location evidence="12">Microtubule organizing center</location>
    </subcellularLocation>
    <subcellularLocation>
        <location evidence="12">Cytoplasm</location>
        <location evidence="12">Perinuclear region</location>
    </subcellularLocation>
    <text evidence="8 12">Localizes to centrosomes in prophase, to the midbody during cytokinesis, diffusely throughout the metaphase spindle and to punctae in interphase that often overlap with MTs (PubMed:20946984). Colocalizes with Sas-4 and SAK at the microtubule organizing center (MTOC) (PubMed:20946984). In the fat body, localizes to a perinuclear non-centrosomal microtubule-organizing centers (ncMTOCs) (PubMed:32066907).</text>
</comment>
<comment type="alternative products">
    <event type="alternative splicing"/>
    <isoform>
        <id>A1ZAU8-1</id>
        <name>C</name>
        <sequence type="displayed"/>
    </isoform>
    <isoform>
        <id>A1ZAU8-2</id>
        <name>A</name>
        <sequence type="described" ref="VSP_037213 VSP_037214 VSP_037215"/>
    </isoform>
    <isoform>
        <id>A1ZAU8-3</id>
        <name>B</name>
        <sequence type="described" ref="VSP_037213 VSP_037214 VSP_037216"/>
    </isoform>
</comment>
<comment type="domain">
    <text evidence="3">The CKK domain binds microtubules.</text>
</comment>
<comment type="disruption phenotype">
    <text evidence="12">RNAi-mediated knockdown reduces circumferential microtubules (MTs) in fat body cells and reduces msps recruitment to the nuclear membrane (PubMed:32066907). No effect on the radial MTs or nuclear positioning (PubMed:32066907). However, simultaneous knockdown of Nin and Patronin, impairs both radial and circumferential MT assembly resulting in defective nuclear positioning (PubMed:32066907). Simultaneous knockdown with Nin, also results in a further decrease in msps recruitment to the nuclear membrane (PubMed:32066907).</text>
</comment>
<comment type="similarity">
    <text evidence="3">Belongs to the CAMSAP1 family.</text>
</comment>
<comment type="sequence caution" evidence="15">
    <conflict type="erroneous initiation">
        <sequence resource="EMBL-CDS" id="AAM49943"/>
    </conflict>
    <text>Truncated N-terminus.</text>
</comment>
<feature type="chain" id="PRO_0000372861" description="Patronin">
    <location>
        <begin position="1"/>
        <end position="1630"/>
    </location>
</feature>
<feature type="domain" description="Calponin-homology (CH)" evidence="2">
    <location>
        <begin position="156"/>
        <end position="288"/>
    </location>
</feature>
<feature type="domain" description="CKK" evidence="3">
    <location>
        <begin position="1489"/>
        <end position="1623"/>
    </location>
</feature>
<feature type="region of interest" description="Disordered" evidence="4">
    <location>
        <begin position="311"/>
        <end position="333"/>
    </location>
</feature>
<feature type="region of interest" description="Disordered" evidence="4">
    <location>
        <begin position="355"/>
        <end position="446"/>
    </location>
</feature>
<feature type="region of interest" description="Disordered" evidence="4">
    <location>
        <begin position="486"/>
        <end position="589"/>
    </location>
</feature>
<feature type="region of interest" description="Disordered" evidence="4">
    <location>
        <begin position="726"/>
        <end position="753"/>
    </location>
</feature>
<feature type="region of interest" description="Disordered" evidence="4">
    <location>
        <begin position="872"/>
        <end position="967"/>
    </location>
</feature>
<feature type="region of interest" description="Disordered" evidence="4">
    <location>
        <begin position="1005"/>
        <end position="1042"/>
    </location>
</feature>
<feature type="region of interest" description="Disordered" evidence="4">
    <location>
        <begin position="1055"/>
        <end position="1186"/>
    </location>
</feature>
<feature type="region of interest" description="Disordered" evidence="4">
    <location>
        <begin position="1200"/>
        <end position="1241"/>
    </location>
</feature>
<feature type="region of interest" description="Disordered" evidence="4">
    <location>
        <begin position="1284"/>
        <end position="1315"/>
    </location>
</feature>
<feature type="region of interest" description="Disordered" evidence="4">
    <location>
        <begin position="1335"/>
        <end position="1459"/>
    </location>
</feature>
<feature type="coiled-coil region" evidence="1">
    <location>
        <begin position="601"/>
        <end position="639"/>
    </location>
</feature>
<feature type="coiled-coil region" evidence="1">
    <location>
        <begin position="1277"/>
        <end position="1343"/>
    </location>
</feature>
<feature type="compositionally biased region" description="Polar residues" evidence="4">
    <location>
        <begin position="319"/>
        <end position="333"/>
    </location>
</feature>
<feature type="compositionally biased region" description="Low complexity" evidence="4">
    <location>
        <begin position="358"/>
        <end position="394"/>
    </location>
</feature>
<feature type="compositionally biased region" description="Basic and acidic residues" evidence="4">
    <location>
        <begin position="404"/>
        <end position="419"/>
    </location>
</feature>
<feature type="compositionally biased region" description="Polar residues" evidence="4">
    <location>
        <begin position="432"/>
        <end position="446"/>
    </location>
</feature>
<feature type="compositionally biased region" description="Basic and acidic residues" evidence="4">
    <location>
        <begin position="495"/>
        <end position="507"/>
    </location>
</feature>
<feature type="compositionally biased region" description="Polar residues" evidence="4">
    <location>
        <begin position="513"/>
        <end position="529"/>
    </location>
</feature>
<feature type="compositionally biased region" description="Low complexity" evidence="4">
    <location>
        <begin position="576"/>
        <end position="587"/>
    </location>
</feature>
<feature type="compositionally biased region" description="Low complexity" evidence="4">
    <location>
        <begin position="738"/>
        <end position="750"/>
    </location>
</feature>
<feature type="compositionally biased region" description="Low complexity" evidence="4">
    <location>
        <begin position="872"/>
        <end position="896"/>
    </location>
</feature>
<feature type="compositionally biased region" description="Gly residues" evidence="4">
    <location>
        <begin position="902"/>
        <end position="914"/>
    </location>
</feature>
<feature type="compositionally biased region" description="Polar residues" evidence="4">
    <location>
        <begin position="919"/>
        <end position="947"/>
    </location>
</feature>
<feature type="compositionally biased region" description="Low complexity" evidence="4">
    <location>
        <begin position="956"/>
        <end position="967"/>
    </location>
</feature>
<feature type="compositionally biased region" description="Low complexity" evidence="4">
    <location>
        <begin position="1008"/>
        <end position="1036"/>
    </location>
</feature>
<feature type="compositionally biased region" description="Polar residues" evidence="4">
    <location>
        <begin position="1065"/>
        <end position="1074"/>
    </location>
</feature>
<feature type="compositionally biased region" description="Basic residues" evidence="4">
    <location>
        <begin position="1105"/>
        <end position="1116"/>
    </location>
</feature>
<feature type="compositionally biased region" description="Polar residues" evidence="4">
    <location>
        <begin position="1167"/>
        <end position="1184"/>
    </location>
</feature>
<feature type="compositionally biased region" description="Low complexity" evidence="4">
    <location>
        <begin position="1218"/>
        <end position="1230"/>
    </location>
</feature>
<feature type="compositionally biased region" description="Basic and acidic residues" evidence="4">
    <location>
        <begin position="1335"/>
        <end position="1348"/>
    </location>
</feature>
<feature type="compositionally biased region" description="Basic residues" evidence="4">
    <location>
        <begin position="1363"/>
        <end position="1374"/>
    </location>
</feature>
<feature type="compositionally biased region" description="Low complexity" evidence="4">
    <location>
        <begin position="1382"/>
        <end position="1400"/>
    </location>
</feature>
<feature type="compositionally biased region" description="Polar residues" evidence="4">
    <location>
        <begin position="1401"/>
        <end position="1412"/>
    </location>
</feature>
<feature type="compositionally biased region" description="Basic and acidic residues" evidence="4">
    <location>
        <begin position="1450"/>
        <end position="1459"/>
    </location>
</feature>
<feature type="modified residue" description="Phosphothreonine" evidence="7">
    <location>
        <position position="322"/>
    </location>
</feature>
<feature type="modified residue" description="Phosphoserine" evidence="7">
    <location>
        <position position="422"/>
    </location>
</feature>
<feature type="modified residue" description="Phosphoserine" evidence="7">
    <location>
        <position position="431"/>
    </location>
</feature>
<feature type="modified residue" description="Phosphoserine" evidence="7">
    <location>
        <position position="441"/>
    </location>
</feature>
<feature type="modified residue" description="Phosphoserine" evidence="5 7">
    <location>
        <position position="460"/>
    </location>
</feature>
<feature type="modified residue" description="Phosphoserine" evidence="7">
    <location>
        <position position="463"/>
    </location>
</feature>
<feature type="modified residue" description="Phosphoserine" evidence="7">
    <location>
        <position position="466"/>
    </location>
</feature>
<feature type="modified residue" description="Phosphothreonine" evidence="7">
    <location>
        <position position="492"/>
    </location>
</feature>
<feature type="modified residue" description="Phosphoserine" evidence="7">
    <location>
        <position position="494"/>
    </location>
</feature>
<feature type="modified residue" description="Phosphoserine" evidence="7">
    <location>
        <position position="496"/>
    </location>
</feature>
<feature type="modified residue" description="Phosphoserine" evidence="7">
    <location>
        <position position="513"/>
    </location>
</feature>
<feature type="modified residue" description="Phosphoserine" evidence="7">
    <location>
        <position position="530"/>
    </location>
</feature>
<feature type="modified residue" description="Phosphoserine" evidence="7">
    <location>
        <position position="1034"/>
    </location>
</feature>
<feature type="modified residue" description="Phosphoserine" evidence="7">
    <location>
        <position position="1035"/>
    </location>
</feature>
<feature type="modified residue" description="Phosphoserine" evidence="7">
    <location>
        <position position="1036"/>
    </location>
</feature>
<feature type="modified residue" description="Phosphoserine" evidence="5">
    <location>
        <position position="1067"/>
    </location>
</feature>
<feature type="modified residue" description="Phosphoserine" evidence="7">
    <location>
        <position position="1219"/>
    </location>
</feature>
<feature type="modified residue" description="Phosphoserine" evidence="7">
    <location>
        <position position="1228"/>
    </location>
</feature>
<feature type="modified residue" description="Phosphoserine" evidence="7">
    <location>
        <position position="1398"/>
    </location>
</feature>
<feature type="modified residue" description="Phosphoserine" evidence="7">
    <location>
        <position position="1399"/>
    </location>
</feature>
<feature type="modified residue" description="Phosphoserine" evidence="7">
    <location>
        <position position="1400"/>
    </location>
</feature>
<feature type="splice variant" id="VSP_037213" description="In isoform A and isoform B." evidence="13 14">
    <original>R</original>
    <variation>RGDFVAAGRPSNWEQSRRPSFA</variation>
    <location>
        <position position="418"/>
    </location>
</feature>
<feature type="splice variant" id="VSP_037214" description="In isoform A and isoform B." evidence="13 14">
    <location>
        <begin position="671"/>
        <end position="719"/>
    </location>
</feature>
<feature type="splice variant" id="VSP_037215" description="In isoform A." evidence="14">
    <location>
        <begin position="1404"/>
        <end position="1488"/>
    </location>
</feature>
<feature type="splice variant" id="VSP_037216" description="In isoform B." evidence="13">
    <original>GYGQLSSNSMKRDYYRGSQDSLTVKESPDDYPSTSSTPIGRRGSYKTSREPAGVERGRTLSRISVAKGSTLNFRGRKSNSLMNLC</original>
    <variation>DSGLGRATPPRRAPSPGMGMGAS</variation>
    <location>
        <begin position="1404"/>
        <end position="1488"/>
    </location>
</feature>
<feature type="sequence conflict" description="In Ref. 3; AAO39638." evidence="15" ref="3">
    <original>T</original>
    <variation>A</variation>
    <location>
        <position position="805"/>
    </location>
</feature>
<feature type="sequence conflict" description="In Ref. 3; AAO39638." evidence="15" ref="3">
    <original>N</original>
    <variation>S</variation>
    <location>
        <position position="1170"/>
    </location>
</feature>
<feature type="sequence conflict" description="In Ref. 3; AAO39638." evidence="15" ref="3">
    <original>P</original>
    <variation>H</variation>
    <location>
        <position position="1177"/>
    </location>
</feature>
<accession>A1ZAU8</accession>
<accession>A1ZAU9</accession>
<accession>A1ZAV0</accession>
<accession>Q86NU5</accession>
<accession>Q8MSU7</accession>
<reference key="1">
    <citation type="journal article" date="2000" name="Science">
        <title>The genome sequence of Drosophila melanogaster.</title>
        <authorList>
            <person name="Adams M.D."/>
            <person name="Celniker S.E."/>
            <person name="Holt R.A."/>
            <person name="Evans C.A."/>
            <person name="Gocayne J.D."/>
            <person name="Amanatides P.G."/>
            <person name="Scherer S.E."/>
            <person name="Li P.W."/>
            <person name="Hoskins R.A."/>
            <person name="Galle R.F."/>
            <person name="George R.A."/>
            <person name="Lewis S.E."/>
            <person name="Richards S."/>
            <person name="Ashburner M."/>
            <person name="Henderson S.N."/>
            <person name="Sutton G.G."/>
            <person name="Wortman J.R."/>
            <person name="Yandell M.D."/>
            <person name="Zhang Q."/>
            <person name="Chen L.X."/>
            <person name="Brandon R.C."/>
            <person name="Rogers Y.-H.C."/>
            <person name="Blazej R.G."/>
            <person name="Champe M."/>
            <person name="Pfeiffer B.D."/>
            <person name="Wan K.H."/>
            <person name="Doyle C."/>
            <person name="Baxter E.G."/>
            <person name="Helt G."/>
            <person name="Nelson C.R."/>
            <person name="Miklos G.L.G."/>
            <person name="Abril J.F."/>
            <person name="Agbayani A."/>
            <person name="An H.-J."/>
            <person name="Andrews-Pfannkoch C."/>
            <person name="Baldwin D."/>
            <person name="Ballew R.M."/>
            <person name="Basu A."/>
            <person name="Baxendale J."/>
            <person name="Bayraktaroglu L."/>
            <person name="Beasley E.M."/>
            <person name="Beeson K.Y."/>
            <person name="Benos P.V."/>
            <person name="Berman B.P."/>
            <person name="Bhandari D."/>
            <person name="Bolshakov S."/>
            <person name="Borkova D."/>
            <person name="Botchan M.R."/>
            <person name="Bouck J."/>
            <person name="Brokstein P."/>
            <person name="Brottier P."/>
            <person name="Burtis K.C."/>
            <person name="Busam D.A."/>
            <person name="Butler H."/>
            <person name="Cadieu E."/>
            <person name="Center A."/>
            <person name="Chandra I."/>
            <person name="Cherry J.M."/>
            <person name="Cawley S."/>
            <person name="Dahlke C."/>
            <person name="Davenport L.B."/>
            <person name="Davies P."/>
            <person name="de Pablos B."/>
            <person name="Delcher A."/>
            <person name="Deng Z."/>
            <person name="Mays A.D."/>
            <person name="Dew I."/>
            <person name="Dietz S.M."/>
            <person name="Dodson K."/>
            <person name="Doup L.E."/>
            <person name="Downes M."/>
            <person name="Dugan-Rocha S."/>
            <person name="Dunkov B.C."/>
            <person name="Dunn P."/>
            <person name="Durbin K.J."/>
            <person name="Evangelista C.C."/>
            <person name="Ferraz C."/>
            <person name="Ferriera S."/>
            <person name="Fleischmann W."/>
            <person name="Fosler C."/>
            <person name="Gabrielian A.E."/>
            <person name="Garg N.S."/>
            <person name="Gelbart W.M."/>
            <person name="Glasser K."/>
            <person name="Glodek A."/>
            <person name="Gong F."/>
            <person name="Gorrell J.H."/>
            <person name="Gu Z."/>
            <person name="Guan P."/>
            <person name="Harris M."/>
            <person name="Harris N.L."/>
            <person name="Harvey D.A."/>
            <person name="Heiman T.J."/>
            <person name="Hernandez J.R."/>
            <person name="Houck J."/>
            <person name="Hostin D."/>
            <person name="Houston K.A."/>
            <person name="Howland T.J."/>
            <person name="Wei M.-H."/>
            <person name="Ibegwam C."/>
            <person name="Jalali M."/>
            <person name="Kalush F."/>
            <person name="Karpen G.H."/>
            <person name="Ke Z."/>
            <person name="Kennison J.A."/>
            <person name="Ketchum K.A."/>
            <person name="Kimmel B.E."/>
            <person name="Kodira C.D."/>
            <person name="Kraft C.L."/>
            <person name="Kravitz S."/>
            <person name="Kulp D."/>
            <person name="Lai Z."/>
            <person name="Lasko P."/>
            <person name="Lei Y."/>
            <person name="Levitsky A.A."/>
            <person name="Li J.H."/>
            <person name="Li Z."/>
            <person name="Liang Y."/>
            <person name="Lin X."/>
            <person name="Liu X."/>
            <person name="Mattei B."/>
            <person name="McIntosh T.C."/>
            <person name="McLeod M.P."/>
            <person name="McPherson D."/>
            <person name="Merkulov G."/>
            <person name="Milshina N.V."/>
            <person name="Mobarry C."/>
            <person name="Morris J."/>
            <person name="Moshrefi A."/>
            <person name="Mount S.M."/>
            <person name="Moy M."/>
            <person name="Murphy B."/>
            <person name="Murphy L."/>
            <person name="Muzny D.M."/>
            <person name="Nelson D.L."/>
            <person name="Nelson D.R."/>
            <person name="Nelson K.A."/>
            <person name="Nixon K."/>
            <person name="Nusskern D.R."/>
            <person name="Pacleb J.M."/>
            <person name="Palazzolo M."/>
            <person name="Pittman G.S."/>
            <person name="Pan S."/>
            <person name="Pollard J."/>
            <person name="Puri V."/>
            <person name="Reese M.G."/>
            <person name="Reinert K."/>
            <person name="Remington K."/>
            <person name="Saunders R.D.C."/>
            <person name="Scheeler F."/>
            <person name="Shen H."/>
            <person name="Shue B.C."/>
            <person name="Siden-Kiamos I."/>
            <person name="Simpson M."/>
            <person name="Skupski M.P."/>
            <person name="Smith T.J."/>
            <person name="Spier E."/>
            <person name="Spradling A.C."/>
            <person name="Stapleton M."/>
            <person name="Strong R."/>
            <person name="Sun E."/>
            <person name="Svirskas R."/>
            <person name="Tector C."/>
            <person name="Turner R."/>
            <person name="Venter E."/>
            <person name="Wang A.H."/>
            <person name="Wang X."/>
            <person name="Wang Z.-Y."/>
            <person name="Wassarman D.A."/>
            <person name="Weinstock G.M."/>
            <person name="Weissenbach J."/>
            <person name="Williams S.M."/>
            <person name="Woodage T."/>
            <person name="Worley K.C."/>
            <person name="Wu D."/>
            <person name="Yang S."/>
            <person name="Yao Q.A."/>
            <person name="Ye J."/>
            <person name="Yeh R.-F."/>
            <person name="Zaveri J.S."/>
            <person name="Zhan M."/>
            <person name="Zhang G."/>
            <person name="Zhao Q."/>
            <person name="Zheng L."/>
            <person name="Zheng X.H."/>
            <person name="Zhong F.N."/>
            <person name="Zhong W."/>
            <person name="Zhou X."/>
            <person name="Zhu S.C."/>
            <person name="Zhu X."/>
            <person name="Smith H.O."/>
            <person name="Gibbs R.A."/>
            <person name="Myers E.W."/>
            <person name="Rubin G.M."/>
            <person name="Venter J.C."/>
        </authorList>
    </citation>
    <scope>NUCLEOTIDE SEQUENCE [LARGE SCALE GENOMIC DNA]</scope>
    <source>
        <strain>Berkeley</strain>
    </source>
</reference>
<reference key="2">
    <citation type="journal article" date="2002" name="Genome Biol.">
        <title>Annotation of the Drosophila melanogaster euchromatic genome: a systematic review.</title>
        <authorList>
            <person name="Misra S."/>
            <person name="Crosby M.A."/>
            <person name="Mungall C.J."/>
            <person name="Matthews B.B."/>
            <person name="Campbell K.S."/>
            <person name="Hradecky P."/>
            <person name="Huang Y."/>
            <person name="Kaminker J.S."/>
            <person name="Millburn G.H."/>
            <person name="Prochnik S.E."/>
            <person name="Smith C.D."/>
            <person name="Tupy J.L."/>
            <person name="Whitfield E.J."/>
            <person name="Bayraktaroglu L."/>
            <person name="Berman B.P."/>
            <person name="Bettencourt B.R."/>
            <person name="Celniker S.E."/>
            <person name="de Grey A.D.N.J."/>
            <person name="Drysdale R.A."/>
            <person name="Harris N.L."/>
            <person name="Richter J."/>
            <person name="Russo S."/>
            <person name="Schroeder A.J."/>
            <person name="Shu S.Q."/>
            <person name="Stapleton M."/>
            <person name="Yamada C."/>
            <person name="Ashburner M."/>
            <person name="Gelbart W.M."/>
            <person name="Rubin G.M."/>
            <person name="Lewis S.E."/>
        </authorList>
    </citation>
    <scope>GENOME REANNOTATION</scope>
    <scope>ALTERNATIVE SPLICING</scope>
    <source>
        <strain>Berkeley</strain>
    </source>
</reference>
<reference key="3">
    <citation type="submission" date="2003-02" db="EMBL/GenBank/DDBJ databases">
        <authorList>
            <person name="Stapleton M."/>
            <person name="Brokstein P."/>
            <person name="Hong L."/>
            <person name="Agbayani A."/>
            <person name="Carlson J.W."/>
            <person name="Champe M."/>
            <person name="Chavez C."/>
            <person name="Dorsett V."/>
            <person name="Dresnek D."/>
            <person name="Farfan D."/>
            <person name="Frise E."/>
            <person name="George R.A."/>
            <person name="Gonzalez M."/>
            <person name="Guarin H."/>
            <person name="Kronmiller B."/>
            <person name="Li P.W."/>
            <person name="Liao G."/>
            <person name="Miranda A."/>
            <person name="Mungall C.J."/>
            <person name="Nunoo J."/>
            <person name="Pacleb J.M."/>
            <person name="Paragas V."/>
            <person name="Park S."/>
            <person name="Patel S."/>
            <person name="Phouanenavong S."/>
            <person name="Wan K.H."/>
            <person name="Yu C."/>
            <person name="Lewis S.E."/>
            <person name="Rubin G.M."/>
            <person name="Celniker S.E."/>
        </authorList>
    </citation>
    <scope>NUCLEOTIDE SEQUENCE [LARGE SCALE MRNA] (ISOFORM A)</scope>
    <source>
        <strain>Berkeley</strain>
        <tissue>Testis</tissue>
    </source>
</reference>
<reference key="4">
    <citation type="journal article" date="2002" name="Genome Biol.">
        <title>A Drosophila full-length cDNA resource.</title>
        <authorList>
            <person name="Stapleton M."/>
            <person name="Carlson J.W."/>
            <person name="Brokstein P."/>
            <person name="Yu C."/>
            <person name="Champe M."/>
            <person name="George R.A."/>
            <person name="Guarin H."/>
            <person name="Kronmiller B."/>
            <person name="Pacleb J.M."/>
            <person name="Park S."/>
            <person name="Wan K.H."/>
            <person name="Rubin G.M."/>
            <person name="Celniker S.E."/>
        </authorList>
    </citation>
    <scope>NUCLEOTIDE SEQUENCE [LARGE SCALE MRNA] OF 941-1630 (ISOFORM B)</scope>
    <source>
        <strain>Berkeley</strain>
        <tissue>Embryo</tissue>
    </source>
</reference>
<reference key="5">
    <citation type="journal article" date="2008" name="J. Proteome Res.">
        <title>Phosphoproteome analysis of Drosophila melanogaster embryos.</title>
        <authorList>
            <person name="Zhai B."/>
            <person name="Villen J."/>
            <person name="Beausoleil S.A."/>
            <person name="Mintseris J."/>
            <person name="Gygi S.P."/>
        </authorList>
    </citation>
    <scope>PHOSPHORYLATION [LARGE SCALE ANALYSIS] AT THR-322; SER-422; SER-431; SER-441; SER-460; SER-463; SER-466; THR-492; SER-494; SER-496; SER-513; SER-530; SER-1034; SER-1035; SER-1036; SER-1219; SER-1228; SER-1398; SER-1399 AND SER-1400</scope>
    <scope>IDENTIFICATION BY MASS SPECTROMETRY</scope>
    <source>
        <tissue>Embryo</tissue>
    </source>
</reference>
<reference key="6">
    <citation type="journal article" date="2007" name="Mol. Biosyst.">
        <title>An integrated chemical, mass spectrometric and computational strategy for (quantitative) phosphoproteomics: application to Drosophila melanogaster Kc167 cells.</title>
        <authorList>
            <person name="Bodenmiller B."/>
            <person name="Mueller L.N."/>
            <person name="Pedrioli P.G.A."/>
            <person name="Pflieger D."/>
            <person name="Juenger M.A."/>
            <person name="Eng J.K."/>
            <person name="Aebersold R."/>
            <person name="Tao W.A."/>
        </authorList>
    </citation>
    <scope>PHOSPHORYLATION [LARGE SCALE ANALYSIS] AT SER-460 AND SER-1067</scope>
    <scope>IDENTIFICATION BY MASS SPECTROMETRY</scope>
</reference>
<reference key="7">
    <citation type="journal article" date="2007" name="Science">
        <title>Genes required for mitotic spindle assembly in Drosophila S2 cells.</title>
        <authorList>
            <person name="Goshima G."/>
            <person name="Wollman R."/>
            <person name="Goodwin S.S."/>
            <person name="Zhang N."/>
            <person name="Scholey J.M."/>
            <person name="Vale R.D."/>
            <person name="Stuurman N."/>
        </authorList>
    </citation>
    <scope>FUNCTION</scope>
</reference>
<reference key="8">
    <citation type="journal article" date="2010" name="Cell">
        <title>Patronin regulates the microtubule network by protecting microtubule minus ends.</title>
        <authorList>
            <person name="Goodwin S.S."/>
            <person name="Vale R.D."/>
        </authorList>
    </citation>
    <scope>FUNCTION</scope>
    <scope>ASSOCIATION WITH MICROTUBULES</scope>
    <scope>SUBUNIT</scope>
    <scope>SUBCELLULAR LOCATION</scope>
</reference>
<reference key="9">
    <citation type="journal article" date="2013" name="J. Cell Biol.">
        <title>Patronin mediates a switch from kinesin-13-dependent poleward flux to anaphase B spindle elongation.</title>
        <authorList>
            <person name="Wang H."/>
            <person name="Brust-Mascher I."/>
            <person name="Civelekoglu-Scholey G."/>
            <person name="Scholey J.M."/>
        </authorList>
    </citation>
    <scope>FUNCTION</scope>
    <scope>SUBCELLULAR LOCATION</scope>
</reference>
<reference key="10">
    <citation type="journal article" date="2015" name="Mol. Biol. Cell">
        <title>The nucleoporin ALADIN regulates Aurora A localization to ensure robust mitotic spindle formation.</title>
        <authorList>
            <person name="Carvalhal S."/>
            <person name="Ribeiro S.A."/>
            <person name="Arocena M."/>
            <person name="Kasciukovic T."/>
            <person name="Temme A."/>
            <person name="Koehler K."/>
            <person name="Huebner A."/>
            <person name="Griffis E.R."/>
        </authorList>
    </citation>
    <scope>FUNCTION</scope>
</reference>
<reference key="11">
    <citation type="journal article" date="2015" name="Nature">
        <title>Polarized endosome dynamics by spindle asymmetry during asymmetric cell division.</title>
        <authorList>
            <person name="Derivery E."/>
            <person name="Seum C."/>
            <person name="Daeden A."/>
            <person name="Loubery S."/>
            <person name="Holtzer L."/>
            <person name="Juelicher F."/>
            <person name="Gonzalez-Gaitan M."/>
        </authorList>
    </citation>
    <scope>FUNCTION</scope>
</reference>
<reference key="12">
    <citation type="journal article" date="2020" name="Nat. Cell Biol.">
        <title>A perinuclear microtubule-organizing centre controls nuclear positioning and basement membrane secretion.</title>
        <authorList>
            <person name="Zheng Y."/>
            <person name="Buchwalter R.A."/>
            <person name="Zheng C."/>
            <person name="Wight E.M."/>
            <person name="Chen J.V."/>
            <person name="Megraw T.L."/>
        </authorList>
    </citation>
    <scope>FUNCTION</scope>
    <scope>INTERACTION WITH MSPS</scope>
    <scope>SUBCELLULAR LOCATION</scope>
    <scope>DISRUPTION PHENOTYPE</scope>
</reference>
<organism>
    <name type="scientific">Drosophila melanogaster</name>
    <name type="common">Fruit fly</name>
    <dbReference type="NCBI Taxonomy" id="7227"/>
    <lineage>
        <taxon>Eukaryota</taxon>
        <taxon>Metazoa</taxon>
        <taxon>Ecdysozoa</taxon>
        <taxon>Arthropoda</taxon>
        <taxon>Hexapoda</taxon>
        <taxon>Insecta</taxon>
        <taxon>Pterygota</taxon>
        <taxon>Neoptera</taxon>
        <taxon>Endopterygota</taxon>
        <taxon>Diptera</taxon>
        <taxon>Brachycera</taxon>
        <taxon>Muscomorpha</taxon>
        <taxon>Ephydroidea</taxon>
        <taxon>Drosophilidae</taxon>
        <taxon>Drosophila</taxon>
        <taxon>Sophophora</taxon>
    </lineage>
</organism>
<proteinExistence type="evidence at protein level"/>
<keyword id="KW-0025">Alternative splicing</keyword>
<keyword id="KW-0131">Cell cycle</keyword>
<keyword id="KW-0175">Coiled coil</keyword>
<keyword id="KW-0963">Cytoplasm</keyword>
<keyword id="KW-0206">Cytoskeleton</keyword>
<keyword id="KW-0493">Microtubule</keyword>
<keyword id="KW-0597">Phosphoprotein</keyword>
<keyword id="KW-1185">Reference proteome</keyword>
<evidence type="ECO:0000255" key="1"/>
<evidence type="ECO:0000255" key="2">
    <source>
        <dbReference type="PROSITE-ProRule" id="PRU00044"/>
    </source>
</evidence>
<evidence type="ECO:0000255" key="3">
    <source>
        <dbReference type="PROSITE-ProRule" id="PRU00841"/>
    </source>
</evidence>
<evidence type="ECO:0000256" key="4">
    <source>
        <dbReference type="SAM" id="MobiDB-lite"/>
    </source>
</evidence>
<evidence type="ECO:0000269" key="5">
    <source>
    </source>
</evidence>
<evidence type="ECO:0000269" key="6">
    <source>
    </source>
</evidence>
<evidence type="ECO:0000269" key="7">
    <source>
    </source>
</evidence>
<evidence type="ECO:0000269" key="8">
    <source>
    </source>
</evidence>
<evidence type="ECO:0000269" key="9">
    <source>
    </source>
</evidence>
<evidence type="ECO:0000269" key="10">
    <source>
    </source>
</evidence>
<evidence type="ECO:0000269" key="11">
    <source>
    </source>
</evidence>
<evidence type="ECO:0000269" key="12">
    <source>
    </source>
</evidence>
<evidence type="ECO:0000303" key="13">
    <source>
    </source>
</evidence>
<evidence type="ECO:0000303" key="14">
    <source ref="3"/>
</evidence>
<evidence type="ECO:0000305" key="15"/>
<protein>
    <recommendedName>
        <fullName>Patronin</fullName>
    </recommendedName>
    <alternativeName>
        <fullName>Short spindle protein 4</fullName>
    </alternativeName>
</protein>
<dbReference type="EMBL" id="AE013599">
    <property type="protein sequence ID" value="AAO41362.1"/>
    <property type="molecule type" value="Genomic_DNA"/>
</dbReference>
<dbReference type="EMBL" id="AE013599">
    <property type="protein sequence ID" value="AAS64821.1"/>
    <property type="molecule type" value="Genomic_DNA"/>
</dbReference>
<dbReference type="EMBL" id="AE013599">
    <property type="protein sequence ID" value="AAS64822.1"/>
    <property type="molecule type" value="Genomic_DNA"/>
</dbReference>
<dbReference type="EMBL" id="BT003634">
    <property type="protein sequence ID" value="AAO39638.1"/>
    <property type="molecule type" value="mRNA"/>
</dbReference>
<dbReference type="EMBL" id="AY118574">
    <property type="protein sequence ID" value="AAM49943.1"/>
    <property type="status" value="ALT_INIT"/>
    <property type="molecule type" value="mRNA"/>
</dbReference>
<dbReference type="RefSeq" id="NP_788398.1">
    <molecule id="A1ZAU8-2"/>
    <property type="nucleotide sequence ID" value="NM_176218.3"/>
</dbReference>
<dbReference type="RefSeq" id="NP_995875.1">
    <molecule id="A1ZAU8-1"/>
    <property type="nucleotide sequence ID" value="NM_206153.3"/>
</dbReference>
<dbReference type="RefSeq" id="NP_995876.1">
    <molecule id="A1ZAU8-3"/>
    <property type="nucleotide sequence ID" value="NM_206154.3"/>
</dbReference>
<dbReference type="SMR" id="A1ZAU8"/>
<dbReference type="BioGRID" id="62669">
    <property type="interactions" value="21"/>
</dbReference>
<dbReference type="FunCoup" id="A1ZAU8">
    <property type="interactions" value="508"/>
</dbReference>
<dbReference type="IntAct" id="A1ZAU8">
    <property type="interactions" value="15"/>
</dbReference>
<dbReference type="STRING" id="7227.FBpp0304550"/>
<dbReference type="iPTMnet" id="A1ZAU8"/>
<dbReference type="PaxDb" id="7227-FBpp0304550"/>
<dbReference type="EnsemblMetazoa" id="FBtr0086948">
    <molecule id="A1ZAU8-2"/>
    <property type="protein sequence ID" value="FBpp0086104"/>
    <property type="gene ID" value="FBgn0263197"/>
</dbReference>
<dbReference type="EnsemblMetazoa" id="FBtr0086949">
    <molecule id="A1ZAU8-3"/>
    <property type="protein sequence ID" value="FBpp0086105"/>
    <property type="gene ID" value="FBgn0263197"/>
</dbReference>
<dbReference type="EnsemblMetazoa" id="FBtr0086950">
    <molecule id="A1ZAU8-1"/>
    <property type="protein sequence ID" value="FBpp0086106"/>
    <property type="gene ID" value="FBgn0263197"/>
</dbReference>
<dbReference type="GeneID" id="36978"/>
<dbReference type="KEGG" id="dme:Dmel_CG33130"/>
<dbReference type="UCSC" id="CG33130-RA">
    <property type="organism name" value="d. melanogaster"/>
</dbReference>
<dbReference type="UCSC" id="CG33130-RB">
    <property type="organism name" value="d. melanogaster"/>
</dbReference>
<dbReference type="UCSC" id="CG33130-RC">
    <molecule id="A1ZAU8-1"/>
    <property type="organism name" value="d. melanogaster"/>
</dbReference>
<dbReference type="AGR" id="FB:FBgn0263197"/>
<dbReference type="CTD" id="36978"/>
<dbReference type="FlyBase" id="FBgn0263197">
    <property type="gene designation" value="Patronin"/>
</dbReference>
<dbReference type="VEuPathDB" id="VectorBase:FBgn0263197"/>
<dbReference type="eggNOG" id="KOG3654">
    <property type="taxonomic scope" value="Eukaryota"/>
</dbReference>
<dbReference type="GeneTree" id="ENSGT00950000182975"/>
<dbReference type="InParanoid" id="A1ZAU8"/>
<dbReference type="OrthoDB" id="2125658at2759"/>
<dbReference type="SignaLink" id="A1ZAU8"/>
<dbReference type="BioGRID-ORCS" id="36978">
    <property type="hits" value="0 hits in 3 CRISPR screens"/>
</dbReference>
<dbReference type="GenomeRNAi" id="36978"/>
<dbReference type="PRO" id="PR:A1ZAU8"/>
<dbReference type="Proteomes" id="UP000000803">
    <property type="component" value="Chromosome 2R"/>
</dbReference>
<dbReference type="Bgee" id="FBgn0263197">
    <property type="expression patterns" value="Expressed in enteroblast (Drosophila) in digestive tract and 266 other cell types or tissues"/>
</dbReference>
<dbReference type="ExpressionAtlas" id="A1ZAU8">
    <property type="expression patterns" value="baseline and differential"/>
</dbReference>
<dbReference type="GO" id="GO:0061802">
    <property type="term" value="C:anterior cell cortex"/>
    <property type="evidence" value="ECO:0000314"/>
    <property type="project" value="FlyBase"/>
</dbReference>
<dbReference type="GO" id="GO:0005813">
    <property type="term" value="C:centrosome"/>
    <property type="evidence" value="ECO:0000314"/>
    <property type="project" value="FlyBase"/>
</dbReference>
<dbReference type="GO" id="GO:0097575">
    <property type="term" value="C:lateral cell cortex"/>
    <property type="evidence" value="ECO:0000314"/>
    <property type="project" value="FlyBase"/>
</dbReference>
<dbReference type="GO" id="GO:0005874">
    <property type="term" value="C:microtubule"/>
    <property type="evidence" value="ECO:0000314"/>
    <property type="project" value="FlyBase"/>
</dbReference>
<dbReference type="GO" id="GO:0030496">
    <property type="term" value="C:midbody"/>
    <property type="evidence" value="ECO:0000314"/>
    <property type="project" value="FlyBase"/>
</dbReference>
<dbReference type="GO" id="GO:0072686">
    <property type="term" value="C:mitotic spindle"/>
    <property type="evidence" value="ECO:0000314"/>
    <property type="project" value="FlyBase"/>
</dbReference>
<dbReference type="GO" id="GO:0048471">
    <property type="term" value="C:perinuclear region of cytoplasm"/>
    <property type="evidence" value="ECO:0007669"/>
    <property type="project" value="UniProtKB-SubCell"/>
</dbReference>
<dbReference type="GO" id="GO:0005819">
    <property type="term" value="C:spindle"/>
    <property type="evidence" value="ECO:0000314"/>
    <property type="project" value="FlyBase"/>
</dbReference>
<dbReference type="GO" id="GO:0120219">
    <property type="term" value="C:subapical part of cell"/>
    <property type="evidence" value="ECO:0000314"/>
    <property type="project" value="FlyBase"/>
</dbReference>
<dbReference type="GO" id="GO:0005516">
    <property type="term" value="F:calmodulin binding"/>
    <property type="evidence" value="ECO:0007669"/>
    <property type="project" value="InterPro"/>
</dbReference>
<dbReference type="GO" id="GO:0008017">
    <property type="term" value="F:microtubule binding"/>
    <property type="evidence" value="ECO:0000250"/>
    <property type="project" value="FlyBase"/>
</dbReference>
<dbReference type="GO" id="GO:0051011">
    <property type="term" value="F:microtubule minus-end binding"/>
    <property type="evidence" value="ECO:0000314"/>
    <property type="project" value="FlyBase"/>
</dbReference>
<dbReference type="GO" id="GO:0030507">
    <property type="term" value="F:spectrin binding"/>
    <property type="evidence" value="ECO:0007669"/>
    <property type="project" value="InterPro"/>
</dbReference>
<dbReference type="GO" id="GO:0045167">
    <property type="term" value="P:asymmetric protein localization involved in cell fate determination"/>
    <property type="evidence" value="ECO:0000315"/>
    <property type="project" value="FlyBase"/>
</dbReference>
<dbReference type="GO" id="GO:0051298">
    <property type="term" value="P:centrosome duplication"/>
    <property type="evidence" value="ECO:0000315"/>
    <property type="project" value="FlyBase"/>
</dbReference>
<dbReference type="GO" id="GO:0043622">
    <property type="term" value="P:cortical microtubule organization"/>
    <property type="evidence" value="ECO:0000315"/>
    <property type="project" value="FlyBase"/>
</dbReference>
<dbReference type="GO" id="GO:0031122">
    <property type="term" value="P:cytoplasmic microtubule organization"/>
    <property type="evidence" value="ECO:0000318"/>
    <property type="project" value="GO_Central"/>
</dbReference>
<dbReference type="GO" id="GO:0061867">
    <property type="term" value="P:establishment of mitotic spindle asymmetry"/>
    <property type="evidence" value="ECO:0000315"/>
    <property type="project" value="FlyBase"/>
</dbReference>
<dbReference type="GO" id="GO:0000226">
    <property type="term" value="P:microtubule cytoskeleton organization"/>
    <property type="evidence" value="ECO:0000315"/>
    <property type="project" value="FlyBase"/>
</dbReference>
<dbReference type="GO" id="GO:0007052">
    <property type="term" value="P:mitotic spindle organization"/>
    <property type="evidence" value="ECO:0000315"/>
    <property type="project" value="FlyBase"/>
</dbReference>
<dbReference type="GO" id="GO:0035331">
    <property type="term" value="P:negative regulation of hippo signaling"/>
    <property type="evidence" value="ECO:0000316"/>
    <property type="project" value="FlyBase"/>
</dbReference>
<dbReference type="GO" id="GO:0007026">
    <property type="term" value="P:negative regulation of microtubule depolymerization"/>
    <property type="evidence" value="ECO:0000315"/>
    <property type="project" value="FlyBase"/>
</dbReference>
<dbReference type="GO" id="GO:0031175">
    <property type="term" value="P:neuron projection development"/>
    <property type="evidence" value="ECO:0007669"/>
    <property type="project" value="InterPro"/>
</dbReference>
<dbReference type="FunFam" id="3.10.20.360:FF:000002">
    <property type="entry name" value="Patronin, isoform M"/>
    <property type="match status" value="1"/>
</dbReference>
<dbReference type="Gene3D" id="3.10.20.360">
    <property type="entry name" value="CKK domain"/>
    <property type="match status" value="1"/>
</dbReference>
<dbReference type="InterPro" id="IPR032940">
    <property type="entry name" value="CAMSAP"/>
</dbReference>
<dbReference type="InterPro" id="IPR022613">
    <property type="entry name" value="CAMSAP-like_CH_dom"/>
</dbReference>
<dbReference type="InterPro" id="IPR031372">
    <property type="entry name" value="CAMSAP_CC1"/>
</dbReference>
<dbReference type="InterPro" id="IPR001715">
    <property type="entry name" value="CH_dom"/>
</dbReference>
<dbReference type="InterPro" id="IPR036872">
    <property type="entry name" value="CH_dom_sf"/>
</dbReference>
<dbReference type="InterPro" id="IPR038209">
    <property type="entry name" value="CKK_dom_sf"/>
</dbReference>
<dbReference type="InterPro" id="IPR014797">
    <property type="entry name" value="CKK_domain"/>
</dbReference>
<dbReference type="InterPro" id="IPR011033">
    <property type="entry name" value="PRC_barrel-like_sf"/>
</dbReference>
<dbReference type="PANTHER" id="PTHR21595">
    <property type="entry name" value="PATRONIN"/>
    <property type="match status" value="1"/>
</dbReference>
<dbReference type="PANTHER" id="PTHR21595:SF0">
    <property type="entry name" value="PATRONIN"/>
    <property type="match status" value="1"/>
</dbReference>
<dbReference type="Pfam" id="PF17095">
    <property type="entry name" value="CAMSAP_CC1"/>
    <property type="match status" value="1"/>
</dbReference>
<dbReference type="Pfam" id="PF11971">
    <property type="entry name" value="CAMSAP_CH"/>
    <property type="match status" value="1"/>
</dbReference>
<dbReference type="Pfam" id="PF08683">
    <property type="entry name" value="CAMSAP_CKK"/>
    <property type="match status" value="1"/>
</dbReference>
<dbReference type="SMART" id="SM01051">
    <property type="entry name" value="CAMSAP_CKK"/>
    <property type="match status" value="1"/>
</dbReference>
<dbReference type="SUPFAM" id="SSF47576">
    <property type="entry name" value="Calponin-homology domain, CH-domain"/>
    <property type="match status" value="1"/>
</dbReference>
<dbReference type="SUPFAM" id="SSF50346">
    <property type="entry name" value="PRC-barrel domain"/>
    <property type="match status" value="1"/>
</dbReference>
<dbReference type="PROSITE" id="PS50021">
    <property type="entry name" value="CH"/>
    <property type="match status" value="1"/>
</dbReference>
<dbReference type="PROSITE" id="PS51508">
    <property type="entry name" value="CKK"/>
    <property type="match status" value="1"/>
</dbReference>
<name>PTRO_DROME</name>